<organism>
    <name type="scientific">Shewanella baltica (strain OS195)</name>
    <dbReference type="NCBI Taxonomy" id="399599"/>
    <lineage>
        <taxon>Bacteria</taxon>
        <taxon>Pseudomonadati</taxon>
        <taxon>Pseudomonadota</taxon>
        <taxon>Gammaproteobacteria</taxon>
        <taxon>Alteromonadales</taxon>
        <taxon>Shewanellaceae</taxon>
        <taxon>Shewanella</taxon>
    </lineage>
</organism>
<sequence length="316" mass="36154">MTSKNSIQKALYLAFERLQWSELRDSVPLTLSEQDLENLRGINEKISLSEVTDIYLPLSRLLNLIVKAKQQRGLVVDEFLGQKPSRSPYIISIAGSVAVGKSTTARILQALLRHWPEHPKVDLVTTDGFLYPLADLKRKGLLQRKGFPESYDMKMLVEFISAVKSGQPHVKAPIYSHVTYDRVKNQHQTVSQPDILILEGLNVLQTGLDSPVDTRRPFVSDFVDFSIYVDAEEPLLKQWYKERFLQFRSGAFSDKKSYFHHYSTLTDDEANTIAANIWDTINGPNLQLNIQPTRERAHLILQKGQDHLMSHVLMRK</sequence>
<keyword id="KW-0067">ATP-binding</keyword>
<keyword id="KW-0173">Coenzyme A biosynthesis</keyword>
<keyword id="KW-0963">Cytoplasm</keyword>
<keyword id="KW-0418">Kinase</keyword>
<keyword id="KW-0547">Nucleotide-binding</keyword>
<keyword id="KW-0808">Transferase</keyword>
<feature type="chain" id="PRO_1000078060" description="Pantothenate kinase">
    <location>
        <begin position="1"/>
        <end position="316"/>
    </location>
</feature>
<feature type="binding site" evidence="1">
    <location>
        <begin position="95"/>
        <end position="102"/>
    </location>
    <ligand>
        <name>ATP</name>
        <dbReference type="ChEBI" id="CHEBI:30616"/>
    </ligand>
</feature>
<accession>A9KW87</accession>
<protein>
    <recommendedName>
        <fullName evidence="1">Pantothenate kinase</fullName>
        <ecNumber evidence="1">2.7.1.33</ecNumber>
    </recommendedName>
    <alternativeName>
        <fullName evidence="1">Pantothenic acid kinase</fullName>
    </alternativeName>
</protein>
<reference key="1">
    <citation type="submission" date="2007-11" db="EMBL/GenBank/DDBJ databases">
        <title>Complete sequence of chromosome of Shewanella baltica OS195.</title>
        <authorList>
            <consortium name="US DOE Joint Genome Institute"/>
            <person name="Copeland A."/>
            <person name="Lucas S."/>
            <person name="Lapidus A."/>
            <person name="Barry K."/>
            <person name="Glavina del Rio T."/>
            <person name="Dalin E."/>
            <person name="Tice H."/>
            <person name="Pitluck S."/>
            <person name="Chain P."/>
            <person name="Malfatti S."/>
            <person name="Shin M."/>
            <person name="Vergez L."/>
            <person name="Schmutz J."/>
            <person name="Larimer F."/>
            <person name="Land M."/>
            <person name="Hauser L."/>
            <person name="Kyrpides N."/>
            <person name="Kim E."/>
            <person name="Brettar I."/>
            <person name="Rodrigues J."/>
            <person name="Konstantinidis K."/>
            <person name="Klappenbach J."/>
            <person name="Hofle M."/>
            <person name="Tiedje J."/>
            <person name="Richardson P."/>
        </authorList>
    </citation>
    <scope>NUCLEOTIDE SEQUENCE [LARGE SCALE GENOMIC DNA]</scope>
    <source>
        <strain>OS195</strain>
    </source>
</reference>
<proteinExistence type="inferred from homology"/>
<name>COAA_SHEB9</name>
<gene>
    <name evidence="1" type="primary">coaA</name>
    <name type="ordered locus">Sbal195_0185</name>
</gene>
<dbReference type="EC" id="2.7.1.33" evidence="1"/>
<dbReference type="EMBL" id="CP000891">
    <property type="protein sequence ID" value="ABX47367.1"/>
    <property type="molecule type" value="Genomic_DNA"/>
</dbReference>
<dbReference type="RefSeq" id="WP_006087509.1">
    <property type="nucleotide sequence ID" value="NC_009997.1"/>
</dbReference>
<dbReference type="SMR" id="A9KW87"/>
<dbReference type="GeneID" id="11774504"/>
<dbReference type="KEGG" id="sbn:Sbal195_0185"/>
<dbReference type="HOGENOM" id="CLU_053818_1_1_6"/>
<dbReference type="UniPathway" id="UPA00241">
    <property type="reaction ID" value="UER00352"/>
</dbReference>
<dbReference type="Proteomes" id="UP000000770">
    <property type="component" value="Chromosome"/>
</dbReference>
<dbReference type="GO" id="GO:0005737">
    <property type="term" value="C:cytoplasm"/>
    <property type="evidence" value="ECO:0007669"/>
    <property type="project" value="UniProtKB-SubCell"/>
</dbReference>
<dbReference type="GO" id="GO:0005524">
    <property type="term" value="F:ATP binding"/>
    <property type="evidence" value="ECO:0007669"/>
    <property type="project" value="UniProtKB-UniRule"/>
</dbReference>
<dbReference type="GO" id="GO:0004594">
    <property type="term" value="F:pantothenate kinase activity"/>
    <property type="evidence" value="ECO:0007669"/>
    <property type="project" value="UniProtKB-UniRule"/>
</dbReference>
<dbReference type="GO" id="GO:0015937">
    <property type="term" value="P:coenzyme A biosynthetic process"/>
    <property type="evidence" value="ECO:0007669"/>
    <property type="project" value="UniProtKB-UniRule"/>
</dbReference>
<dbReference type="CDD" id="cd02025">
    <property type="entry name" value="PanK"/>
    <property type="match status" value="1"/>
</dbReference>
<dbReference type="FunFam" id="3.40.50.300:FF:000242">
    <property type="entry name" value="Pantothenate kinase"/>
    <property type="match status" value="1"/>
</dbReference>
<dbReference type="Gene3D" id="3.40.50.300">
    <property type="entry name" value="P-loop containing nucleotide triphosphate hydrolases"/>
    <property type="match status" value="1"/>
</dbReference>
<dbReference type="HAMAP" id="MF_00215">
    <property type="entry name" value="Pantothen_kinase_1"/>
    <property type="match status" value="1"/>
</dbReference>
<dbReference type="InterPro" id="IPR027417">
    <property type="entry name" value="P-loop_NTPase"/>
</dbReference>
<dbReference type="InterPro" id="IPR004566">
    <property type="entry name" value="PanK"/>
</dbReference>
<dbReference type="InterPro" id="IPR006083">
    <property type="entry name" value="PRK/URK"/>
</dbReference>
<dbReference type="NCBIfam" id="TIGR00554">
    <property type="entry name" value="panK_bact"/>
    <property type="match status" value="1"/>
</dbReference>
<dbReference type="PANTHER" id="PTHR10285">
    <property type="entry name" value="URIDINE KINASE"/>
    <property type="match status" value="1"/>
</dbReference>
<dbReference type="Pfam" id="PF00485">
    <property type="entry name" value="PRK"/>
    <property type="match status" value="1"/>
</dbReference>
<dbReference type="PIRSF" id="PIRSF000545">
    <property type="entry name" value="Pantothenate_kin"/>
    <property type="match status" value="1"/>
</dbReference>
<dbReference type="SUPFAM" id="SSF52540">
    <property type="entry name" value="P-loop containing nucleoside triphosphate hydrolases"/>
    <property type="match status" value="1"/>
</dbReference>
<comment type="catalytic activity">
    <reaction evidence="1">
        <text>(R)-pantothenate + ATP = (R)-4'-phosphopantothenate + ADP + H(+)</text>
        <dbReference type="Rhea" id="RHEA:16373"/>
        <dbReference type="ChEBI" id="CHEBI:10986"/>
        <dbReference type="ChEBI" id="CHEBI:15378"/>
        <dbReference type="ChEBI" id="CHEBI:29032"/>
        <dbReference type="ChEBI" id="CHEBI:30616"/>
        <dbReference type="ChEBI" id="CHEBI:456216"/>
        <dbReference type="EC" id="2.7.1.33"/>
    </reaction>
</comment>
<comment type="pathway">
    <text evidence="1">Cofactor biosynthesis; coenzyme A biosynthesis; CoA from (R)-pantothenate: step 1/5.</text>
</comment>
<comment type="subcellular location">
    <subcellularLocation>
        <location evidence="1">Cytoplasm</location>
    </subcellularLocation>
</comment>
<comment type="similarity">
    <text evidence="1">Belongs to the prokaryotic pantothenate kinase family.</text>
</comment>
<evidence type="ECO:0000255" key="1">
    <source>
        <dbReference type="HAMAP-Rule" id="MF_00215"/>
    </source>
</evidence>